<organism>
    <name type="scientific">Streptococcus suis (strain 89/1591)</name>
    <dbReference type="NCBI Taxonomy" id="286604"/>
    <lineage>
        <taxon>Bacteria</taxon>
        <taxon>Bacillati</taxon>
        <taxon>Bacillota</taxon>
        <taxon>Bacilli</taxon>
        <taxon>Lactobacillales</taxon>
        <taxon>Streptococcaceae</taxon>
        <taxon>Streptococcus</taxon>
    </lineage>
</organism>
<reference key="1">
    <citation type="journal article" date="2002" name="J. Bacteriol.">
        <title>Identification and characterization of two temperature-induced surface-associated proteins of Streptococcus suis with high homologies to members of the arginine deiminase system of Streptococcus pyogenes.</title>
        <authorList>
            <person name="Winterhoff N."/>
            <person name="Goethe R."/>
            <person name="Gruening P."/>
            <person name="Valentin-Weigand P."/>
        </authorList>
    </citation>
    <scope>NUCLEOTIDE SEQUENCE [GENOMIC DNA]</scope>
    <source>
        <strain>I9841/1</strain>
    </source>
</reference>
<reference key="2">
    <citation type="submission" date="2005-10" db="EMBL/GenBank/DDBJ databases">
        <authorList>
            <person name="Gruening P."/>
            <person name="Fulde M."/>
            <person name="Goethe R."/>
            <person name="Valentin-Weigand P."/>
            <person name="Winterhoff N."/>
        </authorList>
    </citation>
    <scope>SEQUENCE REVISION TO 163; 187 AND 292</scope>
</reference>
<reference key="3">
    <citation type="submission" date="2009-01" db="EMBL/GenBank/DDBJ databases">
        <title>Sequencing of the draft genome and assembly of Streptococcus suis 89/1591.</title>
        <authorList>
            <consortium name="US DOE Joint Genome Institute (JGI-PGF)"/>
            <person name="Lucas S."/>
            <person name="Copeland A."/>
            <person name="Lapidus A."/>
            <person name="Glavina del Rio T."/>
            <person name="Dalin E."/>
            <person name="Tice H."/>
            <person name="Bruce D."/>
            <person name="Goodwin L."/>
            <person name="Pitluck S."/>
            <person name="Larimer F."/>
            <person name="Land M.L."/>
            <person name="Hauser L."/>
            <person name="Chertkov O."/>
            <person name="Brettin T."/>
            <person name="Han C."/>
            <person name="Detter J.C."/>
            <person name="Gottschalk M."/>
            <person name="Richardson P."/>
        </authorList>
    </citation>
    <scope>NUCLEOTIDE SEQUENCE [LARGE SCALE GENOMIC DNA]</scope>
    <source>
        <strain>89/1591</strain>
    </source>
</reference>
<proteinExistence type="inferred from homology"/>
<gene>
    <name evidence="2" type="primary">arcB</name>
    <name type="ORF">SsuiDRAFT_2842</name>
</gene>
<name>OTCC_STRE9</name>
<protein>
    <recommendedName>
        <fullName evidence="2">Ornithine carbamoyltransferase, catabolic</fullName>
        <shortName evidence="2">OTCase</shortName>
        <ecNumber evidence="2">2.1.3.3</ecNumber>
    </recommendedName>
</protein>
<comment type="function">
    <text evidence="1">Reversibly catalyzes the transfer of the carbamoyl group from carbamoyl phosphate (CP) to the N(epsilon) atom of ornithine (ORN) to produce L-citrulline.</text>
</comment>
<comment type="catalytic activity">
    <reaction evidence="2">
        <text>carbamoyl phosphate + L-ornithine = L-citrulline + phosphate + H(+)</text>
        <dbReference type="Rhea" id="RHEA:19513"/>
        <dbReference type="ChEBI" id="CHEBI:15378"/>
        <dbReference type="ChEBI" id="CHEBI:43474"/>
        <dbReference type="ChEBI" id="CHEBI:46911"/>
        <dbReference type="ChEBI" id="CHEBI:57743"/>
        <dbReference type="ChEBI" id="CHEBI:58228"/>
        <dbReference type="EC" id="2.1.3.3"/>
    </reaction>
</comment>
<comment type="pathway">
    <text evidence="2">Amino-acid degradation; L-arginine degradation via ADI pathway; carbamoyl phosphate from L-arginine: step 2/2.</text>
</comment>
<comment type="subcellular location">
    <subcellularLocation>
        <location evidence="2">Cytoplasm</location>
    </subcellularLocation>
</comment>
<comment type="similarity">
    <text evidence="2">Belongs to the aspartate/ornithine carbamoyltransferase superfamily. OTCase family.</text>
</comment>
<keyword id="KW-0056">Arginine metabolism</keyword>
<keyword id="KW-0963">Cytoplasm</keyword>
<keyword id="KW-0808">Transferase</keyword>
<dbReference type="EC" id="2.1.3.3" evidence="2"/>
<dbReference type="EMBL" id="AF546864">
    <property type="protein sequence ID" value="AAN76308.2"/>
    <property type="molecule type" value="Genomic_DNA"/>
</dbReference>
<dbReference type="EMBL" id="AAFA03000016">
    <property type="protein sequence ID" value="EEF64413.1"/>
    <property type="molecule type" value="Genomic_DNA"/>
</dbReference>
<dbReference type="SMR" id="Q8GG79"/>
<dbReference type="UniPathway" id="UPA00254">
    <property type="reaction ID" value="UER00365"/>
</dbReference>
<dbReference type="GO" id="GO:0005737">
    <property type="term" value="C:cytoplasm"/>
    <property type="evidence" value="ECO:0007669"/>
    <property type="project" value="UniProtKB-SubCell"/>
</dbReference>
<dbReference type="GO" id="GO:0016597">
    <property type="term" value="F:amino acid binding"/>
    <property type="evidence" value="ECO:0007669"/>
    <property type="project" value="InterPro"/>
</dbReference>
<dbReference type="GO" id="GO:0004585">
    <property type="term" value="F:ornithine carbamoyltransferase activity"/>
    <property type="evidence" value="ECO:0007669"/>
    <property type="project" value="UniProtKB-UniRule"/>
</dbReference>
<dbReference type="GO" id="GO:0042450">
    <property type="term" value="P:arginine biosynthetic process via ornithine"/>
    <property type="evidence" value="ECO:0007669"/>
    <property type="project" value="TreeGrafter"/>
</dbReference>
<dbReference type="GO" id="GO:0019547">
    <property type="term" value="P:arginine catabolic process to ornithine"/>
    <property type="evidence" value="ECO:0007669"/>
    <property type="project" value="UniProtKB-UniPathway"/>
</dbReference>
<dbReference type="GO" id="GO:0019240">
    <property type="term" value="P:citrulline biosynthetic process"/>
    <property type="evidence" value="ECO:0007669"/>
    <property type="project" value="TreeGrafter"/>
</dbReference>
<dbReference type="FunFam" id="3.40.50.1370:FF:000004">
    <property type="entry name" value="Ornithine carbamoyltransferase"/>
    <property type="match status" value="1"/>
</dbReference>
<dbReference type="Gene3D" id="3.40.50.1370">
    <property type="entry name" value="Aspartate/ornithine carbamoyltransferase"/>
    <property type="match status" value="2"/>
</dbReference>
<dbReference type="HAMAP" id="MF_01109">
    <property type="entry name" value="OTCase"/>
    <property type="match status" value="1"/>
</dbReference>
<dbReference type="InterPro" id="IPR006132">
    <property type="entry name" value="Asp/Orn_carbamoyltranf_P-bd"/>
</dbReference>
<dbReference type="InterPro" id="IPR006130">
    <property type="entry name" value="Asp/Orn_carbamoylTrfase"/>
</dbReference>
<dbReference type="InterPro" id="IPR036901">
    <property type="entry name" value="Asp/Orn_carbamoylTrfase_sf"/>
</dbReference>
<dbReference type="InterPro" id="IPR006131">
    <property type="entry name" value="Asp_carbamoyltransf_Asp/Orn-bd"/>
</dbReference>
<dbReference type="InterPro" id="IPR002292">
    <property type="entry name" value="Orn/put_carbamltrans"/>
</dbReference>
<dbReference type="InterPro" id="IPR024904">
    <property type="entry name" value="OTCase_ArgI"/>
</dbReference>
<dbReference type="NCBIfam" id="TIGR00658">
    <property type="entry name" value="orni_carb_tr"/>
    <property type="match status" value="1"/>
</dbReference>
<dbReference type="NCBIfam" id="NF001986">
    <property type="entry name" value="PRK00779.1"/>
    <property type="match status" value="1"/>
</dbReference>
<dbReference type="PANTHER" id="PTHR45753:SF1">
    <property type="entry name" value="ORNITHINE CARBAMOYLTRANSFERASE, CATABOLIC"/>
    <property type="match status" value="1"/>
</dbReference>
<dbReference type="PANTHER" id="PTHR45753">
    <property type="entry name" value="ORNITHINE CARBAMOYLTRANSFERASE, MITOCHONDRIAL"/>
    <property type="match status" value="1"/>
</dbReference>
<dbReference type="Pfam" id="PF00185">
    <property type="entry name" value="OTCace"/>
    <property type="match status" value="1"/>
</dbReference>
<dbReference type="Pfam" id="PF02729">
    <property type="entry name" value="OTCace_N"/>
    <property type="match status" value="1"/>
</dbReference>
<dbReference type="PRINTS" id="PR00100">
    <property type="entry name" value="AOTCASE"/>
</dbReference>
<dbReference type="PRINTS" id="PR00102">
    <property type="entry name" value="OTCASE"/>
</dbReference>
<dbReference type="SUPFAM" id="SSF53671">
    <property type="entry name" value="Aspartate/ornithine carbamoyltransferase"/>
    <property type="match status" value="1"/>
</dbReference>
<dbReference type="PROSITE" id="PS00097">
    <property type="entry name" value="CARBAMOYLTRANSFERASE"/>
    <property type="match status" value="1"/>
</dbReference>
<evidence type="ECO:0000250" key="1"/>
<evidence type="ECO:0000255" key="2">
    <source>
        <dbReference type="HAMAP-Rule" id="MF_01109"/>
    </source>
</evidence>
<evidence type="ECO:0000305" key="3"/>
<accession>Q8GG79</accession>
<accession>B9WVS9</accession>
<accession>Q301C2</accession>
<sequence length="337" mass="37856">MTNVFKGRHFLAEKDFTRAELEWLIDFSAHLKDLKKRNIPHRYLEGKNIALLFEKTSTRTRAAFTVASIDLGAHPEYLGANDIQLGKKESTEDTAKVLGRMFDGIEFRGFSQKMVEELAEFSGVPVWNGLTDAWHPTQMLADYLTVKENFGKLEGLTLVYCGDGRNNVANSLLVTGAILGVNVHIFSPKELFPEEEVVALAEGFAKESGARVLITDNADEAVKGADVLYTDVWVSMGEEDKFAERVALLKPYQVNMELVKKAENENLIFLHCLPAFHDTNTVYGKDVAEKFGVEEMEVTDEVFRSKYARHFDQAENRMHTIKAVMAATLGDPFVPRV</sequence>
<feature type="chain" id="PRO_0000113043" description="Ornithine carbamoyltransferase, catabolic">
    <location>
        <begin position="1"/>
        <end position="337"/>
    </location>
</feature>
<feature type="binding site" evidence="2">
    <location>
        <begin position="57"/>
        <end position="60"/>
    </location>
    <ligand>
        <name>carbamoyl phosphate</name>
        <dbReference type="ChEBI" id="CHEBI:58228"/>
    </ligand>
</feature>
<feature type="binding site" evidence="2">
    <location>
        <position position="84"/>
    </location>
    <ligand>
        <name>carbamoyl phosphate</name>
        <dbReference type="ChEBI" id="CHEBI:58228"/>
    </ligand>
</feature>
<feature type="binding site" evidence="2">
    <location>
        <position position="108"/>
    </location>
    <ligand>
        <name>carbamoyl phosphate</name>
        <dbReference type="ChEBI" id="CHEBI:58228"/>
    </ligand>
</feature>
<feature type="binding site" evidence="2">
    <location>
        <begin position="135"/>
        <end position="138"/>
    </location>
    <ligand>
        <name>carbamoyl phosphate</name>
        <dbReference type="ChEBI" id="CHEBI:58228"/>
    </ligand>
</feature>
<feature type="binding site" evidence="2">
    <location>
        <position position="167"/>
    </location>
    <ligand>
        <name>L-ornithine</name>
        <dbReference type="ChEBI" id="CHEBI:46911"/>
    </ligand>
</feature>
<feature type="binding site" evidence="2">
    <location>
        <position position="231"/>
    </location>
    <ligand>
        <name>L-ornithine</name>
        <dbReference type="ChEBI" id="CHEBI:46911"/>
    </ligand>
</feature>
<feature type="binding site" evidence="2">
    <location>
        <begin position="235"/>
        <end position="236"/>
    </location>
    <ligand>
        <name>L-ornithine</name>
        <dbReference type="ChEBI" id="CHEBI:46911"/>
    </ligand>
</feature>
<feature type="binding site" evidence="2">
    <location>
        <begin position="272"/>
        <end position="273"/>
    </location>
    <ligand>
        <name>carbamoyl phosphate</name>
        <dbReference type="ChEBI" id="CHEBI:58228"/>
    </ligand>
</feature>
<feature type="binding site" evidence="2">
    <location>
        <position position="317"/>
    </location>
    <ligand>
        <name>carbamoyl phosphate</name>
        <dbReference type="ChEBI" id="CHEBI:58228"/>
    </ligand>
</feature>
<feature type="sequence conflict" description="In Ref. 3; EEF64413." evidence="3" ref="3">
    <original>G</original>
    <variation>V</variation>
    <location>
        <position position="203"/>
    </location>
</feature>